<dbReference type="EC" id="2.7.6.1" evidence="1"/>
<dbReference type="EMBL" id="U00089">
    <property type="protein sequence ID" value="AAB95730.1"/>
    <property type="status" value="ALT_INIT"/>
    <property type="molecule type" value="Genomic_DNA"/>
</dbReference>
<dbReference type="PIR" id="S73408">
    <property type="entry name" value="S73408"/>
</dbReference>
<dbReference type="RefSeq" id="NP_109761.1">
    <property type="nucleotide sequence ID" value="NC_000912.1"/>
</dbReference>
<dbReference type="RefSeq" id="WP_015344868.1">
    <property type="nucleotide sequence ID" value="NZ_OU342337.1"/>
</dbReference>
<dbReference type="SMR" id="P75044"/>
<dbReference type="IntAct" id="P75044">
    <property type="interactions" value="2"/>
</dbReference>
<dbReference type="STRING" id="272634.MPN_073"/>
<dbReference type="EnsemblBacteria" id="AAB95730">
    <property type="protein sequence ID" value="AAB95730"/>
    <property type="gene ID" value="MPN_073"/>
</dbReference>
<dbReference type="KEGG" id="mpn:MPN_073"/>
<dbReference type="PATRIC" id="fig|272634.6.peg.74"/>
<dbReference type="HOGENOM" id="CLU_033546_1_0_14"/>
<dbReference type="OrthoDB" id="9777067at2"/>
<dbReference type="BioCyc" id="MetaCyc:MONOMER-576"/>
<dbReference type="UniPathway" id="UPA00087">
    <property type="reaction ID" value="UER00172"/>
</dbReference>
<dbReference type="Proteomes" id="UP000000808">
    <property type="component" value="Chromosome"/>
</dbReference>
<dbReference type="GO" id="GO:0005737">
    <property type="term" value="C:cytoplasm"/>
    <property type="evidence" value="ECO:0007669"/>
    <property type="project" value="UniProtKB-SubCell"/>
</dbReference>
<dbReference type="GO" id="GO:0002189">
    <property type="term" value="C:ribose phosphate diphosphokinase complex"/>
    <property type="evidence" value="ECO:0007669"/>
    <property type="project" value="TreeGrafter"/>
</dbReference>
<dbReference type="GO" id="GO:0005524">
    <property type="term" value="F:ATP binding"/>
    <property type="evidence" value="ECO:0007669"/>
    <property type="project" value="UniProtKB-KW"/>
</dbReference>
<dbReference type="GO" id="GO:0016301">
    <property type="term" value="F:kinase activity"/>
    <property type="evidence" value="ECO:0007669"/>
    <property type="project" value="UniProtKB-KW"/>
</dbReference>
<dbReference type="GO" id="GO:0000287">
    <property type="term" value="F:magnesium ion binding"/>
    <property type="evidence" value="ECO:0007669"/>
    <property type="project" value="UniProtKB-UniRule"/>
</dbReference>
<dbReference type="GO" id="GO:0004749">
    <property type="term" value="F:ribose phosphate diphosphokinase activity"/>
    <property type="evidence" value="ECO:0007669"/>
    <property type="project" value="UniProtKB-UniRule"/>
</dbReference>
<dbReference type="GO" id="GO:0006015">
    <property type="term" value="P:5-phosphoribose 1-diphosphate biosynthetic process"/>
    <property type="evidence" value="ECO:0007669"/>
    <property type="project" value="UniProtKB-UniRule"/>
</dbReference>
<dbReference type="GO" id="GO:0006164">
    <property type="term" value="P:purine nucleotide biosynthetic process"/>
    <property type="evidence" value="ECO:0007669"/>
    <property type="project" value="TreeGrafter"/>
</dbReference>
<dbReference type="GO" id="GO:0009156">
    <property type="term" value="P:ribonucleoside monophosphate biosynthetic process"/>
    <property type="evidence" value="ECO:0007669"/>
    <property type="project" value="InterPro"/>
</dbReference>
<dbReference type="CDD" id="cd06223">
    <property type="entry name" value="PRTases_typeI"/>
    <property type="match status" value="1"/>
</dbReference>
<dbReference type="FunFam" id="3.40.50.2020:FF:000007">
    <property type="entry name" value="Ribose-phosphate pyrophosphokinase"/>
    <property type="match status" value="1"/>
</dbReference>
<dbReference type="Gene3D" id="3.40.50.2020">
    <property type="match status" value="2"/>
</dbReference>
<dbReference type="HAMAP" id="MF_00583_B">
    <property type="entry name" value="RibP_PPkinase_B"/>
    <property type="match status" value="1"/>
</dbReference>
<dbReference type="InterPro" id="IPR000842">
    <property type="entry name" value="PRib_PP_synth_CS"/>
</dbReference>
<dbReference type="InterPro" id="IPR029099">
    <property type="entry name" value="Pribosyltran_N"/>
</dbReference>
<dbReference type="InterPro" id="IPR000836">
    <property type="entry name" value="PRibTrfase_dom"/>
</dbReference>
<dbReference type="InterPro" id="IPR029057">
    <property type="entry name" value="PRTase-like"/>
</dbReference>
<dbReference type="InterPro" id="IPR005946">
    <property type="entry name" value="Rib-P_diPkinase"/>
</dbReference>
<dbReference type="InterPro" id="IPR037515">
    <property type="entry name" value="Rib-P_diPkinase_bac"/>
</dbReference>
<dbReference type="NCBIfam" id="NF001815">
    <property type="entry name" value="PRK00553.1"/>
    <property type="match status" value="1"/>
</dbReference>
<dbReference type="NCBIfam" id="NF002320">
    <property type="entry name" value="PRK01259.1"/>
    <property type="match status" value="1"/>
</dbReference>
<dbReference type="NCBIfam" id="TIGR01251">
    <property type="entry name" value="ribP_PPkin"/>
    <property type="match status" value="1"/>
</dbReference>
<dbReference type="PANTHER" id="PTHR10210">
    <property type="entry name" value="RIBOSE-PHOSPHATE DIPHOSPHOKINASE FAMILY MEMBER"/>
    <property type="match status" value="1"/>
</dbReference>
<dbReference type="PANTHER" id="PTHR10210:SF41">
    <property type="entry name" value="RIBOSE-PHOSPHATE PYROPHOSPHOKINASE 1, CHLOROPLASTIC"/>
    <property type="match status" value="1"/>
</dbReference>
<dbReference type="Pfam" id="PF00156">
    <property type="entry name" value="Pribosyltran"/>
    <property type="match status" value="1"/>
</dbReference>
<dbReference type="Pfam" id="PF13793">
    <property type="entry name" value="Pribosyltran_N"/>
    <property type="match status" value="1"/>
</dbReference>
<dbReference type="SMART" id="SM01400">
    <property type="entry name" value="Pribosyltran_N"/>
    <property type="match status" value="1"/>
</dbReference>
<dbReference type="SUPFAM" id="SSF53271">
    <property type="entry name" value="PRTase-like"/>
    <property type="match status" value="1"/>
</dbReference>
<dbReference type="PROSITE" id="PS00114">
    <property type="entry name" value="PRPP_SYNTHASE"/>
    <property type="match status" value="1"/>
</dbReference>
<accession>P75044</accession>
<feature type="chain" id="PRO_0000141162" description="Ribose-phosphate pyrophosphokinase">
    <location>
        <begin position="1"/>
        <end position="328"/>
    </location>
</feature>
<feature type="active site" evidence="1">
    <location>
        <position position="195"/>
    </location>
</feature>
<feature type="binding site" evidence="1">
    <location>
        <begin position="39"/>
        <end position="41"/>
    </location>
    <ligand>
        <name>ATP</name>
        <dbReference type="ChEBI" id="CHEBI:30616"/>
    </ligand>
</feature>
<feature type="binding site" evidence="1">
    <location>
        <begin position="98"/>
        <end position="99"/>
    </location>
    <ligand>
        <name>ATP</name>
        <dbReference type="ChEBI" id="CHEBI:30616"/>
    </ligand>
</feature>
<feature type="binding site" evidence="1">
    <location>
        <position position="132"/>
    </location>
    <ligand>
        <name>Mg(2+)</name>
        <dbReference type="ChEBI" id="CHEBI:18420"/>
        <label>1</label>
    </ligand>
</feature>
<feature type="binding site" evidence="1">
    <location>
        <position position="172"/>
    </location>
    <ligand>
        <name>Mg(2+)</name>
        <dbReference type="ChEBI" id="CHEBI:18420"/>
        <label>2</label>
    </ligand>
</feature>
<feature type="binding site" evidence="1">
    <location>
        <position position="197"/>
    </location>
    <ligand>
        <name>D-ribose 5-phosphate</name>
        <dbReference type="ChEBI" id="CHEBI:78346"/>
    </ligand>
</feature>
<feature type="binding site" evidence="1">
    <location>
        <position position="221"/>
    </location>
    <ligand>
        <name>D-ribose 5-phosphate</name>
        <dbReference type="ChEBI" id="CHEBI:78346"/>
    </ligand>
</feature>
<feature type="binding site" evidence="1">
    <location>
        <begin position="225"/>
        <end position="229"/>
    </location>
    <ligand>
        <name>D-ribose 5-phosphate</name>
        <dbReference type="ChEBI" id="CHEBI:78346"/>
    </ligand>
</feature>
<sequence length="328" mass="36742">MDRHNHVVFSLSKTHDLVSRICQKLKMPMGLITHNEFADGETYIRFEESVRNKDVFIFQSTCAPVNDSLMELLIAIDALKRGSAKSITAILPYYGYARQDRKTMGREPITSKLVADLLTTAGVSRVALTDIHSDQTQGFFNIPVDTLRTYHVFLTRTVELLGKKDLVVVSPDYGGVKRARLIATSLELPLAIIDKRRPAHNVAESINVLGEVANKNCLIVDDMIDTGGTVIAAAKLLREHHAKKVCVMATHGLFNGEAPQRFQKAFNEGLVDYLFVSNSIPQTKFDQCPQFQVIDLAPLFEEVLLCYANNSSISAIYTRHIEWIKKHV</sequence>
<gene>
    <name evidence="1" type="primary">prs</name>
    <name type="synonym">prsA</name>
    <name type="ordered locus">MPN_073</name>
    <name type="ORF">MP082</name>
</gene>
<reference key="1">
    <citation type="journal article" date="1996" name="Nucleic Acids Res.">
        <title>Complete sequence analysis of the genome of the bacterium Mycoplasma pneumoniae.</title>
        <authorList>
            <person name="Himmelreich R."/>
            <person name="Hilbert H."/>
            <person name="Plagens H."/>
            <person name="Pirkl E."/>
            <person name="Li B.-C."/>
            <person name="Herrmann R."/>
        </authorList>
    </citation>
    <scope>NUCLEOTIDE SEQUENCE [LARGE SCALE GENOMIC DNA]</scope>
    <source>
        <strain>ATCC 29342 / M129 / Subtype 1</strain>
    </source>
</reference>
<comment type="function">
    <text evidence="1">Involved in the biosynthesis of the central metabolite phospho-alpha-D-ribosyl-1-pyrophosphate (PRPP) via the transfer of pyrophosphoryl group from ATP to 1-hydroxyl of ribose-5-phosphate (Rib-5-P).</text>
</comment>
<comment type="catalytic activity">
    <reaction evidence="1">
        <text>D-ribose 5-phosphate + ATP = 5-phospho-alpha-D-ribose 1-diphosphate + AMP + H(+)</text>
        <dbReference type="Rhea" id="RHEA:15609"/>
        <dbReference type="ChEBI" id="CHEBI:15378"/>
        <dbReference type="ChEBI" id="CHEBI:30616"/>
        <dbReference type="ChEBI" id="CHEBI:58017"/>
        <dbReference type="ChEBI" id="CHEBI:78346"/>
        <dbReference type="ChEBI" id="CHEBI:456215"/>
        <dbReference type="EC" id="2.7.6.1"/>
    </reaction>
</comment>
<comment type="cofactor">
    <cofactor evidence="1">
        <name>Mg(2+)</name>
        <dbReference type="ChEBI" id="CHEBI:18420"/>
    </cofactor>
    <text evidence="1">Binds 2 Mg(2+) ions per subunit.</text>
</comment>
<comment type="pathway">
    <text evidence="1">Metabolic intermediate biosynthesis; 5-phospho-alpha-D-ribose 1-diphosphate biosynthesis; 5-phospho-alpha-D-ribose 1-diphosphate from D-ribose 5-phosphate (route I): step 1/1.</text>
</comment>
<comment type="subunit">
    <text evidence="1">Homohexamer.</text>
</comment>
<comment type="subcellular location">
    <subcellularLocation>
        <location evidence="1">Cytoplasm</location>
    </subcellularLocation>
</comment>
<comment type="similarity">
    <text evidence="1">Belongs to the ribose-phosphate pyrophosphokinase family. Class I subfamily.</text>
</comment>
<comment type="sequence caution" evidence="2">
    <conflict type="erroneous initiation">
        <sequence resource="EMBL-CDS" id="AAB95730"/>
    </conflict>
    <text>Extended N-terminus.</text>
</comment>
<protein>
    <recommendedName>
        <fullName evidence="1">Ribose-phosphate pyrophosphokinase</fullName>
        <shortName evidence="1">RPPK</shortName>
        <ecNumber evidence="1">2.7.6.1</ecNumber>
    </recommendedName>
    <alternativeName>
        <fullName evidence="1">5-phospho-D-ribosyl alpha-1-diphosphate synthase</fullName>
    </alternativeName>
    <alternativeName>
        <fullName evidence="1">Phosphoribosyl diphosphate synthase</fullName>
    </alternativeName>
    <alternativeName>
        <fullName evidence="1">Phosphoribosyl pyrophosphate synthase</fullName>
        <shortName evidence="1">P-Rib-PP synthase</shortName>
        <shortName evidence="1">PRPP synthase</shortName>
        <shortName evidence="1">PRPPase</shortName>
    </alternativeName>
</protein>
<organism>
    <name type="scientific">Mycoplasma pneumoniae (strain ATCC 29342 / M129 / Subtype 1)</name>
    <name type="common">Mycoplasmoides pneumoniae</name>
    <dbReference type="NCBI Taxonomy" id="272634"/>
    <lineage>
        <taxon>Bacteria</taxon>
        <taxon>Bacillati</taxon>
        <taxon>Mycoplasmatota</taxon>
        <taxon>Mycoplasmoidales</taxon>
        <taxon>Mycoplasmoidaceae</taxon>
        <taxon>Mycoplasmoides</taxon>
    </lineage>
</organism>
<name>KPRS_MYCPN</name>
<proteinExistence type="inferred from homology"/>
<evidence type="ECO:0000255" key="1">
    <source>
        <dbReference type="HAMAP-Rule" id="MF_00583"/>
    </source>
</evidence>
<evidence type="ECO:0000305" key="2"/>
<keyword id="KW-0067">ATP-binding</keyword>
<keyword id="KW-0963">Cytoplasm</keyword>
<keyword id="KW-0418">Kinase</keyword>
<keyword id="KW-0460">Magnesium</keyword>
<keyword id="KW-0479">Metal-binding</keyword>
<keyword id="KW-0545">Nucleotide biosynthesis</keyword>
<keyword id="KW-0547">Nucleotide-binding</keyword>
<keyword id="KW-1185">Reference proteome</keyword>
<keyword id="KW-0808">Transferase</keyword>